<geneLocation type="chloroplast"/>
<accession>Q7H8L6</accession>
<dbReference type="EMBL" id="AY100853">
    <property type="protein sequence ID" value="AAM55534.1"/>
    <property type="molecule type" value="Genomic_DNA"/>
</dbReference>
<dbReference type="SMR" id="Q7H8L6"/>
<dbReference type="GO" id="GO:0009535">
    <property type="term" value="C:chloroplast thylakoid membrane"/>
    <property type="evidence" value="ECO:0007669"/>
    <property type="project" value="UniProtKB-SubCell"/>
</dbReference>
<dbReference type="GO" id="GO:0009539">
    <property type="term" value="C:photosystem II reaction center"/>
    <property type="evidence" value="ECO:0007669"/>
    <property type="project" value="InterPro"/>
</dbReference>
<dbReference type="GO" id="GO:0009055">
    <property type="term" value="F:electron transfer activity"/>
    <property type="evidence" value="ECO:0007669"/>
    <property type="project" value="UniProtKB-UniRule"/>
</dbReference>
<dbReference type="GO" id="GO:0020037">
    <property type="term" value="F:heme binding"/>
    <property type="evidence" value="ECO:0007669"/>
    <property type="project" value="InterPro"/>
</dbReference>
<dbReference type="GO" id="GO:0005506">
    <property type="term" value="F:iron ion binding"/>
    <property type="evidence" value="ECO:0007669"/>
    <property type="project" value="UniProtKB-UniRule"/>
</dbReference>
<dbReference type="GO" id="GO:0009767">
    <property type="term" value="P:photosynthetic electron transport chain"/>
    <property type="evidence" value="ECO:0007669"/>
    <property type="project" value="InterPro"/>
</dbReference>
<dbReference type="HAMAP" id="MF_00643">
    <property type="entry name" value="PSII_PsbF"/>
    <property type="match status" value="1"/>
</dbReference>
<dbReference type="InterPro" id="IPR006241">
    <property type="entry name" value="PSII_cyt_b559_bsu"/>
</dbReference>
<dbReference type="InterPro" id="IPR006216">
    <property type="entry name" value="PSII_cyt_b559_CS"/>
</dbReference>
<dbReference type="InterPro" id="IPR013081">
    <property type="entry name" value="PSII_cyt_b559_N"/>
</dbReference>
<dbReference type="NCBIfam" id="TIGR01333">
    <property type="entry name" value="cyt_b559_beta"/>
    <property type="match status" value="1"/>
</dbReference>
<dbReference type="Pfam" id="PF00283">
    <property type="entry name" value="Cytochrom_B559"/>
    <property type="match status" value="1"/>
</dbReference>
<dbReference type="PIRSF" id="PIRSF000037">
    <property type="entry name" value="PsbF"/>
    <property type="match status" value="1"/>
</dbReference>
<dbReference type="SUPFAM" id="SSF161045">
    <property type="entry name" value="Cytochrome b559 subunits"/>
    <property type="match status" value="1"/>
</dbReference>
<dbReference type="PROSITE" id="PS00537">
    <property type="entry name" value="CYTOCHROME_B559"/>
    <property type="match status" value="1"/>
</dbReference>
<feature type="chain" id="PRO_0000200406" description="Cytochrome b559 subunit beta">
    <location>
        <begin position="1"/>
        <end position="39"/>
    </location>
</feature>
<feature type="transmembrane region" description="Helical" evidence="1">
    <location>
        <begin position="14"/>
        <end position="30"/>
    </location>
</feature>
<feature type="binding site" description="axial binding residue" evidence="1">
    <location>
        <position position="18"/>
    </location>
    <ligand>
        <name>heme</name>
        <dbReference type="ChEBI" id="CHEBI:30413"/>
        <note>ligand shared with alpha subunit</note>
    </ligand>
    <ligandPart>
        <name>Fe</name>
        <dbReference type="ChEBI" id="CHEBI:18248"/>
    </ligandPart>
</feature>
<reference key="1">
    <citation type="journal article" date="2002" name="Am. J. Bot.">
        <title>Monophyly of the Convolvulaceae and circumscription of their major lineages based on DNA sequences of multiple chloroplast loci.</title>
        <authorList>
            <person name="Stefanovic S."/>
            <person name="Krueger L."/>
            <person name="Olmstead R.G."/>
        </authorList>
        <dbReference type="AGRICOLA" id="IND23320510"/>
    </citation>
    <scope>NUCLEOTIDE SEQUENCE [GENOMIC DNA]</scope>
</reference>
<gene>
    <name evidence="1" type="primary">psbF</name>
</gene>
<comment type="function">
    <text evidence="1">This b-type cytochrome is tightly associated with the reaction center of photosystem II (PSII). PSII is a light-driven water:plastoquinone oxidoreductase that uses light energy to abstract electrons from H(2)O, generating O(2) and a proton gradient subsequently used for ATP formation. It consists of a core antenna complex that captures photons, and an electron transfer chain that converts photonic excitation into a charge separation.</text>
</comment>
<comment type="cofactor">
    <cofactor evidence="1">
        <name>heme b</name>
        <dbReference type="ChEBI" id="CHEBI:60344"/>
    </cofactor>
    <text evidence="1">With its partner (PsbE) binds heme. PSII binds additional chlorophylls, carotenoids and specific lipids.</text>
</comment>
<comment type="subunit">
    <text evidence="1">Heterodimer of an alpha subunit and a beta subunit. PSII is composed of 1 copy each of membrane proteins PsbA, PsbB, PsbC, PsbD, PsbE, PsbF, PsbH, PsbI, PsbJ, PsbK, PsbL, PsbM, PsbT, PsbX, PsbY, PsbZ, Psb30/Ycf12, at least 3 peripheral proteins of the oxygen-evolving complex and a large number of cofactors. It forms dimeric complexes.</text>
</comment>
<comment type="subcellular location">
    <subcellularLocation>
        <location evidence="1">Plastid</location>
        <location evidence="1">Chloroplast thylakoid membrane</location>
        <topology evidence="1">Single-pass membrane protein</topology>
    </subcellularLocation>
</comment>
<comment type="similarity">
    <text evidence="1">Belongs to the PsbE/PsbF family.</text>
</comment>
<organism>
    <name type="scientific">Ipomoea coccinea</name>
    <name type="common">Scarlet morning-glory</name>
    <name type="synonym">Quamoclit coccinea</name>
    <dbReference type="NCBI Taxonomy" id="28523"/>
    <lineage>
        <taxon>Eukaryota</taxon>
        <taxon>Viridiplantae</taxon>
        <taxon>Streptophyta</taxon>
        <taxon>Embryophyta</taxon>
        <taxon>Tracheophyta</taxon>
        <taxon>Spermatophyta</taxon>
        <taxon>Magnoliopsida</taxon>
        <taxon>eudicotyledons</taxon>
        <taxon>Gunneridae</taxon>
        <taxon>Pentapetalae</taxon>
        <taxon>asterids</taxon>
        <taxon>lamiids</taxon>
        <taxon>Solanales</taxon>
        <taxon>Convolvulaceae</taxon>
        <taxon>Ipomoeeae</taxon>
        <taxon>Ipomoea</taxon>
    </lineage>
</organism>
<evidence type="ECO:0000255" key="1">
    <source>
        <dbReference type="HAMAP-Rule" id="MF_00643"/>
    </source>
</evidence>
<sequence length="39" mass="4484">MTIDRTYPIFTVRWLAVHGLAVPTVFFLGSISAMQFIQR</sequence>
<proteinExistence type="inferred from homology"/>
<keyword id="KW-0150">Chloroplast</keyword>
<keyword id="KW-0249">Electron transport</keyword>
<keyword id="KW-0349">Heme</keyword>
<keyword id="KW-0408">Iron</keyword>
<keyword id="KW-0472">Membrane</keyword>
<keyword id="KW-0479">Metal-binding</keyword>
<keyword id="KW-0602">Photosynthesis</keyword>
<keyword id="KW-0604">Photosystem II</keyword>
<keyword id="KW-0934">Plastid</keyword>
<keyword id="KW-0793">Thylakoid</keyword>
<keyword id="KW-0812">Transmembrane</keyword>
<keyword id="KW-1133">Transmembrane helix</keyword>
<keyword id="KW-0813">Transport</keyword>
<name>PSBF_IPOCC</name>
<protein>
    <recommendedName>
        <fullName evidence="1">Cytochrome b559 subunit beta</fullName>
    </recommendedName>
    <alternativeName>
        <fullName evidence="1">PSII reaction center subunit VI</fullName>
    </alternativeName>
</protein>